<keyword id="KW-0004">4Fe-4S</keyword>
<keyword id="KW-0408">Iron</keyword>
<keyword id="KW-0411">Iron-sulfur</keyword>
<keyword id="KW-0414">Isoprene biosynthesis</keyword>
<keyword id="KW-0479">Metal-binding</keyword>
<keyword id="KW-0560">Oxidoreductase</keyword>
<keyword id="KW-1185">Reference proteome</keyword>
<evidence type="ECO:0000255" key="1">
    <source>
        <dbReference type="HAMAP-Rule" id="MF_00191"/>
    </source>
</evidence>
<proteinExistence type="inferred from homology"/>
<protein>
    <recommendedName>
        <fullName evidence="1">4-hydroxy-3-methylbut-2-enyl diphosphate reductase</fullName>
        <shortName evidence="1">HMBPP reductase</shortName>
        <ecNumber evidence="1">1.17.7.4</ecNumber>
    </recommendedName>
</protein>
<gene>
    <name evidence="1" type="primary">ispH</name>
    <name type="ordered locus">Rleg2_0611</name>
</gene>
<comment type="function">
    <text evidence="1">Catalyzes the conversion of 1-hydroxy-2-methyl-2-(E)-butenyl 4-diphosphate (HMBPP) into a mixture of isopentenyl diphosphate (IPP) and dimethylallyl diphosphate (DMAPP). Acts in the terminal step of the DOXP/MEP pathway for isoprenoid precursor biosynthesis.</text>
</comment>
<comment type="catalytic activity">
    <reaction evidence="1">
        <text>isopentenyl diphosphate + 2 oxidized [2Fe-2S]-[ferredoxin] + H2O = (2E)-4-hydroxy-3-methylbut-2-enyl diphosphate + 2 reduced [2Fe-2S]-[ferredoxin] + 2 H(+)</text>
        <dbReference type="Rhea" id="RHEA:24488"/>
        <dbReference type="Rhea" id="RHEA-COMP:10000"/>
        <dbReference type="Rhea" id="RHEA-COMP:10001"/>
        <dbReference type="ChEBI" id="CHEBI:15377"/>
        <dbReference type="ChEBI" id="CHEBI:15378"/>
        <dbReference type="ChEBI" id="CHEBI:33737"/>
        <dbReference type="ChEBI" id="CHEBI:33738"/>
        <dbReference type="ChEBI" id="CHEBI:128753"/>
        <dbReference type="ChEBI" id="CHEBI:128769"/>
        <dbReference type="EC" id="1.17.7.4"/>
    </reaction>
</comment>
<comment type="catalytic activity">
    <reaction evidence="1">
        <text>dimethylallyl diphosphate + 2 oxidized [2Fe-2S]-[ferredoxin] + H2O = (2E)-4-hydroxy-3-methylbut-2-enyl diphosphate + 2 reduced [2Fe-2S]-[ferredoxin] + 2 H(+)</text>
        <dbReference type="Rhea" id="RHEA:24825"/>
        <dbReference type="Rhea" id="RHEA-COMP:10000"/>
        <dbReference type="Rhea" id="RHEA-COMP:10001"/>
        <dbReference type="ChEBI" id="CHEBI:15377"/>
        <dbReference type="ChEBI" id="CHEBI:15378"/>
        <dbReference type="ChEBI" id="CHEBI:33737"/>
        <dbReference type="ChEBI" id="CHEBI:33738"/>
        <dbReference type="ChEBI" id="CHEBI:57623"/>
        <dbReference type="ChEBI" id="CHEBI:128753"/>
        <dbReference type="EC" id="1.17.7.4"/>
    </reaction>
</comment>
<comment type="cofactor">
    <cofactor evidence="1">
        <name>[4Fe-4S] cluster</name>
        <dbReference type="ChEBI" id="CHEBI:49883"/>
    </cofactor>
    <text evidence="1">Binds 1 [4Fe-4S] cluster per subunit.</text>
</comment>
<comment type="pathway">
    <text evidence="1">Isoprenoid biosynthesis; dimethylallyl diphosphate biosynthesis; dimethylallyl diphosphate from (2E)-4-hydroxy-3-methylbutenyl diphosphate: step 1/1.</text>
</comment>
<comment type="pathway">
    <text evidence="1">Isoprenoid biosynthesis; isopentenyl diphosphate biosynthesis via DXP pathway; isopentenyl diphosphate from 1-deoxy-D-xylulose 5-phosphate: step 6/6.</text>
</comment>
<comment type="similarity">
    <text evidence="1">Belongs to the IspH family.</text>
</comment>
<feature type="chain" id="PRO_1000098968" description="4-hydroxy-3-methylbut-2-enyl diphosphate reductase">
    <location>
        <begin position="1"/>
        <end position="333"/>
    </location>
</feature>
<feature type="active site" description="Proton donor" evidence="1">
    <location>
        <position position="137"/>
    </location>
</feature>
<feature type="binding site" evidence="1">
    <location>
        <position position="20"/>
    </location>
    <ligand>
        <name>[4Fe-4S] cluster</name>
        <dbReference type="ChEBI" id="CHEBI:49883"/>
    </ligand>
</feature>
<feature type="binding site" evidence="1">
    <location>
        <position position="49"/>
    </location>
    <ligand>
        <name>(2E)-4-hydroxy-3-methylbut-2-enyl diphosphate</name>
        <dbReference type="ChEBI" id="CHEBI:128753"/>
    </ligand>
</feature>
<feature type="binding site" evidence="1">
    <location>
        <position position="49"/>
    </location>
    <ligand>
        <name>dimethylallyl diphosphate</name>
        <dbReference type="ChEBI" id="CHEBI:57623"/>
    </ligand>
</feature>
<feature type="binding site" evidence="1">
    <location>
        <position position="49"/>
    </location>
    <ligand>
        <name>isopentenyl diphosphate</name>
        <dbReference type="ChEBI" id="CHEBI:128769"/>
    </ligand>
</feature>
<feature type="binding site" evidence="1">
    <location>
        <position position="85"/>
    </location>
    <ligand>
        <name>(2E)-4-hydroxy-3-methylbut-2-enyl diphosphate</name>
        <dbReference type="ChEBI" id="CHEBI:128753"/>
    </ligand>
</feature>
<feature type="binding site" evidence="1">
    <location>
        <position position="85"/>
    </location>
    <ligand>
        <name>dimethylallyl diphosphate</name>
        <dbReference type="ChEBI" id="CHEBI:57623"/>
    </ligand>
</feature>
<feature type="binding site" evidence="1">
    <location>
        <position position="85"/>
    </location>
    <ligand>
        <name>isopentenyl diphosphate</name>
        <dbReference type="ChEBI" id="CHEBI:128769"/>
    </ligand>
</feature>
<feature type="binding site" evidence="1">
    <location>
        <position position="107"/>
    </location>
    <ligand>
        <name>[4Fe-4S] cluster</name>
        <dbReference type="ChEBI" id="CHEBI:49883"/>
    </ligand>
</feature>
<feature type="binding site" evidence="1">
    <location>
        <position position="135"/>
    </location>
    <ligand>
        <name>(2E)-4-hydroxy-3-methylbut-2-enyl diphosphate</name>
        <dbReference type="ChEBI" id="CHEBI:128753"/>
    </ligand>
</feature>
<feature type="binding site" evidence="1">
    <location>
        <position position="135"/>
    </location>
    <ligand>
        <name>dimethylallyl diphosphate</name>
        <dbReference type="ChEBI" id="CHEBI:57623"/>
    </ligand>
</feature>
<feature type="binding site" evidence="1">
    <location>
        <position position="135"/>
    </location>
    <ligand>
        <name>isopentenyl diphosphate</name>
        <dbReference type="ChEBI" id="CHEBI:128769"/>
    </ligand>
</feature>
<feature type="binding site" evidence="1">
    <location>
        <position position="176"/>
    </location>
    <ligand>
        <name>(2E)-4-hydroxy-3-methylbut-2-enyl diphosphate</name>
        <dbReference type="ChEBI" id="CHEBI:128753"/>
    </ligand>
</feature>
<feature type="binding site" evidence="1">
    <location>
        <position position="206"/>
    </location>
    <ligand>
        <name>[4Fe-4S] cluster</name>
        <dbReference type="ChEBI" id="CHEBI:49883"/>
    </ligand>
</feature>
<feature type="binding site" evidence="1">
    <location>
        <position position="234"/>
    </location>
    <ligand>
        <name>(2E)-4-hydroxy-3-methylbut-2-enyl diphosphate</name>
        <dbReference type="ChEBI" id="CHEBI:128753"/>
    </ligand>
</feature>
<feature type="binding site" evidence="1">
    <location>
        <position position="234"/>
    </location>
    <ligand>
        <name>dimethylallyl diphosphate</name>
        <dbReference type="ChEBI" id="CHEBI:57623"/>
    </ligand>
</feature>
<feature type="binding site" evidence="1">
    <location>
        <position position="234"/>
    </location>
    <ligand>
        <name>isopentenyl diphosphate</name>
        <dbReference type="ChEBI" id="CHEBI:128769"/>
    </ligand>
</feature>
<feature type="binding site" evidence="1">
    <location>
        <position position="235"/>
    </location>
    <ligand>
        <name>(2E)-4-hydroxy-3-methylbut-2-enyl diphosphate</name>
        <dbReference type="ChEBI" id="CHEBI:128753"/>
    </ligand>
</feature>
<feature type="binding site" evidence="1">
    <location>
        <position position="235"/>
    </location>
    <ligand>
        <name>dimethylallyl diphosphate</name>
        <dbReference type="ChEBI" id="CHEBI:57623"/>
    </ligand>
</feature>
<feature type="binding site" evidence="1">
    <location>
        <position position="235"/>
    </location>
    <ligand>
        <name>isopentenyl diphosphate</name>
        <dbReference type="ChEBI" id="CHEBI:128769"/>
    </ligand>
</feature>
<feature type="binding site" evidence="1">
    <location>
        <position position="236"/>
    </location>
    <ligand>
        <name>(2E)-4-hydroxy-3-methylbut-2-enyl diphosphate</name>
        <dbReference type="ChEBI" id="CHEBI:128753"/>
    </ligand>
</feature>
<feature type="binding site" evidence="1">
    <location>
        <position position="236"/>
    </location>
    <ligand>
        <name>dimethylallyl diphosphate</name>
        <dbReference type="ChEBI" id="CHEBI:57623"/>
    </ligand>
</feature>
<feature type="binding site" evidence="1">
    <location>
        <position position="236"/>
    </location>
    <ligand>
        <name>isopentenyl diphosphate</name>
        <dbReference type="ChEBI" id="CHEBI:128769"/>
    </ligand>
</feature>
<feature type="binding site" evidence="1">
    <location>
        <position position="279"/>
    </location>
    <ligand>
        <name>(2E)-4-hydroxy-3-methylbut-2-enyl diphosphate</name>
        <dbReference type="ChEBI" id="CHEBI:128753"/>
    </ligand>
</feature>
<feature type="binding site" evidence="1">
    <location>
        <position position="279"/>
    </location>
    <ligand>
        <name>dimethylallyl diphosphate</name>
        <dbReference type="ChEBI" id="CHEBI:57623"/>
    </ligand>
</feature>
<feature type="binding site" evidence="1">
    <location>
        <position position="279"/>
    </location>
    <ligand>
        <name>isopentenyl diphosphate</name>
        <dbReference type="ChEBI" id="CHEBI:128769"/>
    </ligand>
</feature>
<dbReference type="EC" id="1.17.7.4" evidence="1"/>
<dbReference type="EMBL" id="CP001191">
    <property type="protein sequence ID" value="ACI53908.1"/>
    <property type="molecule type" value="Genomic_DNA"/>
</dbReference>
<dbReference type="RefSeq" id="WP_003588093.1">
    <property type="nucleotide sequence ID" value="NC_011369.1"/>
</dbReference>
<dbReference type="SMR" id="B5ZSV9"/>
<dbReference type="STRING" id="395492.Rleg2_0611"/>
<dbReference type="KEGG" id="rlt:Rleg2_0611"/>
<dbReference type="eggNOG" id="COG0761">
    <property type="taxonomic scope" value="Bacteria"/>
</dbReference>
<dbReference type="HOGENOM" id="CLU_027486_1_0_5"/>
<dbReference type="UniPathway" id="UPA00056">
    <property type="reaction ID" value="UER00097"/>
</dbReference>
<dbReference type="UniPathway" id="UPA00059">
    <property type="reaction ID" value="UER00105"/>
</dbReference>
<dbReference type="Proteomes" id="UP000008330">
    <property type="component" value="Chromosome"/>
</dbReference>
<dbReference type="GO" id="GO:0051539">
    <property type="term" value="F:4 iron, 4 sulfur cluster binding"/>
    <property type="evidence" value="ECO:0007669"/>
    <property type="project" value="UniProtKB-UniRule"/>
</dbReference>
<dbReference type="GO" id="GO:0051745">
    <property type="term" value="F:4-hydroxy-3-methylbut-2-enyl diphosphate reductase activity"/>
    <property type="evidence" value="ECO:0007669"/>
    <property type="project" value="UniProtKB-UniRule"/>
</dbReference>
<dbReference type="GO" id="GO:0046872">
    <property type="term" value="F:metal ion binding"/>
    <property type="evidence" value="ECO:0007669"/>
    <property type="project" value="UniProtKB-KW"/>
</dbReference>
<dbReference type="GO" id="GO:0050992">
    <property type="term" value="P:dimethylallyl diphosphate biosynthetic process"/>
    <property type="evidence" value="ECO:0007669"/>
    <property type="project" value="UniProtKB-UniRule"/>
</dbReference>
<dbReference type="GO" id="GO:0019288">
    <property type="term" value="P:isopentenyl diphosphate biosynthetic process, methylerythritol 4-phosphate pathway"/>
    <property type="evidence" value="ECO:0007669"/>
    <property type="project" value="UniProtKB-UniRule"/>
</dbReference>
<dbReference type="GO" id="GO:0016114">
    <property type="term" value="P:terpenoid biosynthetic process"/>
    <property type="evidence" value="ECO:0007669"/>
    <property type="project" value="UniProtKB-UniRule"/>
</dbReference>
<dbReference type="CDD" id="cd13944">
    <property type="entry name" value="lytB_ispH"/>
    <property type="match status" value="1"/>
</dbReference>
<dbReference type="Gene3D" id="3.40.50.11270">
    <property type="match status" value="1"/>
</dbReference>
<dbReference type="Gene3D" id="3.40.1010.20">
    <property type="entry name" value="4-hydroxy-3-methylbut-2-enyl diphosphate reductase, catalytic domain"/>
    <property type="match status" value="2"/>
</dbReference>
<dbReference type="HAMAP" id="MF_00191">
    <property type="entry name" value="IspH"/>
    <property type="match status" value="1"/>
</dbReference>
<dbReference type="InterPro" id="IPR003451">
    <property type="entry name" value="LytB/IspH"/>
</dbReference>
<dbReference type="NCBIfam" id="TIGR00216">
    <property type="entry name" value="ispH_lytB"/>
    <property type="match status" value="1"/>
</dbReference>
<dbReference type="NCBIfam" id="NF002190">
    <property type="entry name" value="PRK01045.1-4"/>
    <property type="match status" value="1"/>
</dbReference>
<dbReference type="PANTHER" id="PTHR30426">
    <property type="entry name" value="4-HYDROXY-3-METHYLBUT-2-ENYL DIPHOSPHATE REDUCTASE"/>
    <property type="match status" value="1"/>
</dbReference>
<dbReference type="PANTHER" id="PTHR30426:SF0">
    <property type="entry name" value="4-HYDROXY-3-METHYLBUT-2-ENYL DIPHOSPHATE REDUCTASE"/>
    <property type="match status" value="1"/>
</dbReference>
<dbReference type="Pfam" id="PF02401">
    <property type="entry name" value="LYTB"/>
    <property type="match status" value="1"/>
</dbReference>
<accession>B5ZSV9</accession>
<organism>
    <name type="scientific">Rhizobium leguminosarum bv. trifolii (strain WSM2304)</name>
    <dbReference type="NCBI Taxonomy" id="395492"/>
    <lineage>
        <taxon>Bacteria</taxon>
        <taxon>Pseudomonadati</taxon>
        <taxon>Pseudomonadota</taxon>
        <taxon>Alphaproteobacteria</taxon>
        <taxon>Hyphomicrobiales</taxon>
        <taxon>Rhizobiaceae</taxon>
        <taxon>Rhizobium/Agrobacterium group</taxon>
        <taxon>Rhizobium</taxon>
    </lineage>
</organism>
<name>ISPH_RHILW</name>
<sequence>MNIAAKPPLTIRLCGPRGFCAGVDRAIQIVVLALKSYGAPVYVRHEIVHNRYVVEGLEAKGAVFVEELDEIPAEHRAQPVVFSAHGVPKSVPEDAVSRNLFYLDATCPLVSKVHKQAMRHNRLGRHVVLIGHAGHPEVIGTMGQLPEGSVSLIETIEDADAYIPVDADNLGYVTQTTLSVDDTAGVIARLQERFPNLTAPAADSICYATTNRQEVVKQAAPGCDLFIIVGAPNSSNSKRLVEVALRAGAKKSILVQRAAELDWDEIGAISTLGLSAGASAPEVIVNEIIEAFRARFDARVELAETVQETENFLVNRELRSIELTAADMAFVNG</sequence>
<reference key="1">
    <citation type="journal article" date="2010" name="Stand. Genomic Sci.">
        <title>Complete genome sequence of Rhizobium leguminosarum bv trifolii strain WSM2304, an effective microsymbiont of the South American clover Trifolium polymorphum.</title>
        <authorList>
            <person name="Reeve W."/>
            <person name="O'Hara G."/>
            <person name="Chain P."/>
            <person name="Ardley J."/>
            <person name="Brau L."/>
            <person name="Nandesena K."/>
            <person name="Tiwari R."/>
            <person name="Malfatti S."/>
            <person name="Kiss H."/>
            <person name="Lapidus A."/>
            <person name="Copeland A."/>
            <person name="Nolan M."/>
            <person name="Land M."/>
            <person name="Ivanova N."/>
            <person name="Mavromatis K."/>
            <person name="Markowitz V."/>
            <person name="Kyrpides N."/>
            <person name="Melino V."/>
            <person name="Denton M."/>
            <person name="Yates R."/>
            <person name="Howieson J."/>
        </authorList>
    </citation>
    <scope>NUCLEOTIDE SEQUENCE [LARGE SCALE GENOMIC DNA]</scope>
    <source>
        <strain>WSM2304</strain>
    </source>
</reference>